<comment type="function">
    <text evidence="2 3 4">Nucleotidase that shows high phosphatase activity toward non-canonical pyrimidine nucleotides and three canonical nucleoside 5'-monophosphates (UMP, dUMP, and dTMP), and very low activity against TDP, IMP, UDP, GMP, dGMP, AMP, dAMP, and 6-phosphogluconate. Appears to function as a house-cleaning nucleotidase in vivo, since the general nucleotidase activity of YjjG allows it to protect cells against non-canonical pyrimidine derivatives such as 5-fluoro-2'-deoxyuridine, 5-fluorouridine, 5-fluoroorotate, 5-fluorouracil, and 5-aza-2'-deoxycytidine, and prevents the incorporation of potentially mutagenic nucleotides into DNA. Its dUMP phosphatase activity that catalyzes the hydrolysis of dUMP to deoxyuridine is necessary for thymine utilization via the thymine salvage pathway. Is strictly specific to substrates with 5'-phosphates and shows no activity against nucleoside 2'- or 3'-monophosphates.</text>
</comment>
<comment type="catalytic activity">
    <reaction evidence="2">
        <text>a ribonucleoside 5'-phosphate + H2O = a ribonucleoside + phosphate</text>
        <dbReference type="Rhea" id="RHEA:12484"/>
        <dbReference type="ChEBI" id="CHEBI:15377"/>
        <dbReference type="ChEBI" id="CHEBI:18254"/>
        <dbReference type="ChEBI" id="CHEBI:43474"/>
        <dbReference type="ChEBI" id="CHEBI:58043"/>
        <dbReference type="EC" id="3.1.3.5"/>
    </reaction>
</comment>
<comment type="catalytic activity">
    <reaction evidence="2 4">
        <text>a 2'-deoxyribonucleoside 5'-phosphate + H2O = a 2'-deoxyribonucleoside + phosphate</text>
        <dbReference type="Rhea" id="RHEA:36167"/>
        <dbReference type="ChEBI" id="CHEBI:15377"/>
        <dbReference type="ChEBI" id="CHEBI:18274"/>
        <dbReference type="ChEBI" id="CHEBI:43474"/>
        <dbReference type="ChEBI" id="CHEBI:65317"/>
    </reaction>
</comment>
<comment type="catalytic activity">
    <reaction evidence="2">
        <text>UMP + H2O = uridine + phosphate</text>
        <dbReference type="Rhea" id="RHEA:29359"/>
        <dbReference type="ChEBI" id="CHEBI:15377"/>
        <dbReference type="ChEBI" id="CHEBI:16704"/>
        <dbReference type="ChEBI" id="CHEBI:43474"/>
        <dbReference type="ChEBI" id="CHEBI:57865"/>
    </reaction>
</comment>
<comment type="catalytic activity">
    <reaction evidence="2">
        <text>dUMP + H2O = 2'-deoxyuridine + phosphate</text>
        <dbReference type="Rhea" id="RHEA:29355"/>
        <dbReference type="ChEBI" id="CHEBI:15377"/>
        <dbReference type="ChEBI" id="CHEBI:16450"/>
        <dbReference type="ChEBI" id="CHEBI:43474"/>
        <dbReference type="ChEBI" id="CHEBI:246422"/>
    </reaction>
</comment>
<comment type="catalytic activity">
    <reaction evidence="2 4">
        <text>dTMP + H2O = thymidine + phosphate</text>
        <dbReference type="Rhea" id="RHEA:11080"/>
        <dbReference type="ChEBI" id="CHEBI:15377"/>
        <dbReference type="ChEBI" id="CHEBI:17748"/>
        <dbReference type="ChEBI" id="CHEBI:43474"/>
        <dbReference type="ChEBI" id="CHEBI:63528"/>
    </reaction>
</comment>
<comment type="cofactor">
    <cofactor evidence="2">
        <name>Mn(2+)</name>
        <dbReference type="ChEBI" id="CHEBI:29035"/>
    </cofactor>
    <cofactor evidence="2">
        <name>Mg(2+)</name>
        <dbReference type="ChEBI" id="CHEBI:18420"/>
    </cofactor>
    <cofactor evidence="2">
        <name>Co(2+)</name>
        <dbReference type="ChEBI" id="CHEBI:48828"/>
    </cofactor>
    <text evidence="2">Divalent metal cation. Highest activity with Mn(2+) followed by Mg(2+) and Co(2+).</text>
</comment>
<comment type="activity regulation">
    <text evidence="2">In contrast to nucleotidases from other families, is not inhibited by ribo- and deoxyribonucleoside di- and triphosphates.</text>
</comment>
<comment type="biophysicochemical properties">
    <kinetics>
        <KM evidence="2">0.51 mM for 5'-dTMP (in the presence of Mn(2+))</KM>
        <KM evidence="4">2.14 mM for 5'-dTMP (in the presence of 5 mM Mg(2+) and 0.5 mM Mn(2+))</KM>
        <KM evidence="2">0.66 mM for 5'-UMP (in the presence of Mn(2+))</KM>
        <KM evidence="2">0.77 mM for 5'-dUMP (in the presence of Mn(2+))</KM>
        <KM evidence="4">0.237 mM for 5-FdUMP (in the presence of 5 mM Mg(2+) and 0.5 mM Mn(2+))</KM>
        <KM evidence="2">17.8 mM for pNPP (in the presence of Mg(2+))</KM>
        <Vmax evidence="2">65.6 umol/min/mg enzyme with 5'-dTMP as substrate</Vmax>
        <Vmax evidence="2">73.9 umol/min/mg enzyme with 5'-UMP as substrate</Vmax>
        <Vmax evidence="2">46.3 umol/min/mg enzyme with 5'-dUMP as substrate</Vmax>
        <Vmax evidence="2">8.86 umol/min/mg enzyme with pNPP as substrate</Vmax>
        <text>The catalytic efficiency is 15-fold higher with 5-fluoro-2'-deoxyuridine monophosphate (5-FdUMP) than with 5'-dUMP as substrate.</text>
    </kinetics>
    <phDependence>
        <text evidence="2">Optimum pH is 7.5.</text>
    </phDependence>
</comment>
<comment type="subunit">
    <text evidence="2">Monomer, homodimer and possibly homotetramer in solution.</text>
</comment>
<comment type="subcellular location">
    <subcellularLocation>
        <location evidence="5">Cytoplasm</location>
    </subcellularLocation>
</comment>
<comment type="disruption phenotype">
    <text evidence="3 4">Cells lacking this gene become highly sensitive to toxic non-canonical pyrimidine derivatives such as 5-fluoro-2'-deoxyuridine (5-FdUMP); the growth is completely blocked. Disruption of yjjG in a thyA mutant blocks the utilization of thymine but not that of thymidine for growth.</text>
</comment>
<comment type="similarity">
    <text evidence="5">Belongs to the HAD-like hydrolase superfamily. YjjG family.</text>
</comment>
<feature type="chain" id="PRO_0000066274" description="Pyrimidine 5'-nucleotidase YjjG">
    <location>
        <begin position="1"/>
        <end position="225"/>
    </location>
</feature>
<feature type="active site" description="Nucleophile" evidence="1">
    <location>
        <position position="9"/>
    </location>
</feature>
<feature type="sequence conflict" description="In Ref. 2." evidence="5" ref="2">
    <original>L</original>
    <variation>V</variation>
    <location>
        <position position="75"/>
    </location>
</feature>
<feature type="sequence conflict" description="In Ref. 2." evidence="5" ref="2">
    <original>A</original>
    <variation>R</variation>
    <location>
        <position position="100"/>
    </location>
</feature>
<feature type="sequence conflict" description="In Ref. 2." evidence="5" ref="2">
    <original>R</original>
    <variation>G</variation>
    <location>
        <position position="130"/>
    </location>
</feature>
<name>YJJG_ECOLI</name>
<reference key="1">
    <citation type="submission" date="1993-09" db="EMBL/GenBank/DDBJ databases">
        <authorList>
            <person name="Mikuni O."/>
            <person name="Ito K."/>
            <person name="Matsumura K."/>
            <person name="Mofatt J."/>
            <person name="Nobukuni T."/>
            <person name="McCaughan K."/>
            <person name="Tate W."/>
            <person name="Nakamura Y."/>
        </authorList>
    </citation>
    <scope>NUCLEOTIDE SEQUENCE [GENOMIC DNA]</scope>
    <source>
        <strain>K12</strain>
    </source>
</reference>
<reference key="2">
    <citation type="submission" date="1993-09" db="EMBL/GenBank/DDBJ databases">
        <authorList>
            <person name="Grentzmann G."/>
            <person name="Brechemier-Baey D."/>
            <person name="Heurgue V."/>
            <person name="Mora L."/>
            <person name="Buckingham R.H."/>
        </authorList>
    </citation>
    <scope>NUCLEOTIDE SEQUENCE [GENOMIC DNA]</scope>
    <source>
        <strain>K12 / W3110 / ATCC 27325 / DSM 5911</strain>
    </source>
</reference>
<reference key="3">
    <citation type="journal article" date="1995" name="Nucleic Acids Res.">
        <title>Analysis of the Escherichia coli genome VI: DNA sequence of the region from 92.8 through 100 minutes.</title>
        <authorList>
            <person name="Burland V.D."/>
            <person name="Plunkett G. III"/>
            <person name="Sofia H.J."/>
            <person name="Daniels D.L."/>
            <person name="Blattner F.R."/>
        </authorList>
    </citation>
    <scope>NUCLEOTIDE SEQUENCE [LARGE SCALE GENOMIC DNA]</scope>
    <source>
        <strain>K12 / MG1655 / ATCC 47076</strain>
    </source>
</reference>
<reference key="4">
    <citation type="journal article" date="1997" name="Science">
        <title>The complete genome sequence of Escherichia coli K-12.</title>
        <authorList>
            <person name="Blattner F.R."/>
            <person name="Plunkett G. III"/>
            <person name="Bloch C.A."/>
            <person name="Perna N.T."/>
            <person name="Burland V."/>
            <person name="Riley M."/>
            <person name="Collado-Vides J."/>
            <person name="Glasner J.D."/>
            <person name="Rode C.K."/>
            <person name="Mayhew G.F."/>
            <person name="Gregor J."/>
            <person name="Davis N.W."/>
            <person name="Kirkpatrick H.A."/>
            <person name="Goeden M.A."/>
            <person name="Rose D.J."/>
            <person name="Mau B."/>
            <person name="Shao Y."/>
        </authorList>
    </citation>
    <scope>NUCLEOTIDE SEQUENCE [LARGE SCALE GENOMIC DNA]</scope>
    <source>
        <strain>K12 / MG1655 / ATCC 47076</strain>
    </source>
</reference>
<reference key="5">
    <citation type="journal article" date="2006" name="Mol. Syst. Biol.">
        <title>Highly accurate genome sequences of Escherichia coli K-12 strains MG1655 and W3110.</title>
        <authorList>
            <person name="Hayashi K."/>
            <person name="Morooka N."/>
            <person name="Yamamoto Y."/>
            <person name="Fujita K."/>
            <person name="Isono K."/>
            <person name="Choi S."/>
            <person name="Ohtsubo E."/>
            <person name="Baba T."/>
            <person name="Wanner B.L."/>
            <person name="Mori H."/>
            <person name="Horiuchi T."/>
        </authorList>
    </citation>
    <scope>NUCLEOTIDE SEQUENCE [LARGE SCALE GENOMIC DNA]</scope>
    <source>
        <strain>K12 / W3110 / ATCC 27325 / DSM 5911</strain>
    </source>
</reference>
<reference key="6">
    <citation type="unpublished observations" date="1993-12">
        <authorList>
            <person name="Rudd K.E."/>
        </authorList>
    </citation>
    <scope>IDENTIFICATION</scope>
</reference>
<reference key="7">
    <citation type="journal article" date="2004" name="J. Biol. Chem.">
        <title>General enzymatic screens identify three new nucleotidases in Escherichia coli. Biochemical characterization of SurE, YfbR, and YjjG.</title>
        <authorList>
            <person name="Proudfoot M."/>
            <person name="Kuznetsova E."/>
            <person name="Brown G."/>
            <person name="Rao N.N."/>
            <person name="Kitagawa M."/>
            <person name="Mori H."/>
            <person name="Savchenko A."/>
            <person name="Yakunin A.F."/>
        </authorList>
    </citation>
    <scope>FUNCTION</scope>
    <scope>CATALYTIC ACTIVITY</scope>
    <scope>CHARACTERIZATION</scope>
    <scope>COFACTOR</scope>
    <scope>ACTIVITY REGULATION</scope>
    <scope>SUBUNIT</scope>
    <scope>BIOPHYSICOCHEMICAL PROPERTIES</scope>
</reference>
<reference key="8">
    <citation type="journal article" date="2007" name="FEMS Microbiol. Lett.">
        <title>The Escherichia coli protein YjjG is a house-cleaning nucleotidase in vivo.</title>
        <authorList>
            <person name="Titz B."/>
            <person name="Hauser R."/>
            <person name="Engelbrecher A."/>
            <person name="Uetz P."/>
        </authorList>
    </citation>
    <scope>FUNCTION</scope>
    <scope>CATALYTIC ACTIVITY</scope>
    <scope>BIOPHYSICOCHEMICAL PROPERTIES</scope>
    <scope>DISRUPTION PHENOTYPE</scope>
    <source>
        <strain>K12 / BW25113</strain>
    </source>
</reference>
<reference key="9">
    <citation type="journal article" date="2007" name="J. Bacteriol.">
        <title>YjjG, a dUMP phosphatase, is critical for thymine utilization by Escherichia coli K-12.</title>
        <authorList>
            <person name="Weiss B."/>
        </authorList>
    </citation>
    <scope>FUNCTION</scope>
    <scope>DISRUPTION PHENOTYPE</scope>
    <source>
        <strain>K12</strain>
    </source>
</reference>
<sequence length="225" mass="25301">MKWDWIFFDADETLFTFDSFTGLQRMFLDYSVTFTAEDFQDYQAVNKPLWVDYQNGAITSLQLQHGRFESWAERLNVEPGKLNEAFINAMAEICTPLPGAVSLLNAIRGNAKIGIITNGFSALQQVRLERTGLRDYFDLLVISEEVGVAKPNKKIFDYALEQAGNPDRSRVLMVGDTAESDILGGINAGLATCWLNAHHREQPEGIAPTWTVSSLHELEQLLCKH</sequence>
<dbReference type="EC" id="3.1.3.5" evidence="2"/>
<dbReference type="EMBL" id="D17724">
    <property type="status" value="NOT_ANNOTATED_CDS"/>
    <property type="molecule type" value="Genomic_DNA"/>
</dbReference>
<dbReference type="EMBL" id="Z26313">
    <property type="status" value="NOT_ANNOTATED_CDS"/>
    <property type="molecule type" value="Genomic_DNA"/>
</dbReference>
<dbReference type="EMBL" id="U14003">
    <property type="protein sequence ID" value="AAA97270.1"/>
    <property type="molecule type" value="Genomic_DNA"/>
</dbReference>
<dbReference type="EMBL" id="U00096">
    <property type="protein sequence ID" value="AAC77327.1"/>
    <property type="molecule type" value="Genomic_DNA"/>
</dbReference>
<dbReference type="EMBL" id="AP009048">
    <property type="protein sequence ID" value="BAE78362.1"/>
    <property type="molecule type" value="Genomic_DNA"/>
</dbReference>
<dbReference type="PIR" id="S56598">
    <property type="entry name" value="S56598"/>
</dbReference>
<dbReference type="RefSeq" id="NP_418791.1">
    <property type="nucleotide sequence ID" value="NC_000913.3"/>
</dbReference>
<dbReference type="RefSeq" id="WP_000870710.1">
    <property type="nucleotide sequence ID" value="NZ_SSZK01000015.1"/>
</dbReference>
<dbReference type="SMR" id="P0A8Y1"/>
<dbReference type="BioGRID" id="4262174">
    <property type="interactions" value="7"/>
</dbReference>
<dbReference type="FunCoup" id="P0A8Y1">
    <property type="interactions" value="224"/>
</dbReference>
<dbReference type="STRING" id="511145.b4374"/>
<dbReference type="PaxDb" id="511145-b4374"/>
<dbReference type="DNASU" id="948899"/>
<dbReference type="EnsemblBacteria" id="AAC77327">
    <property type="protein sequence ID" value="AAC77327"/>
    <property type="gene ID" value="b4374"/>
</dbReference>
<dbReference type="GeneID" id="75169868"/>
<dbReference type="GeneID" id="948899"/>
<dbReference type="KEGG" id="ecj:JW4336"/>
<dbReference type="KEGG" id="eco:b4374"/>
<dbReference type="KEGG" id="ecoc:C3026_23630"/>
<dbReference type="PATRIC" id="fig|1411691.4.peg.2314"/>
<dbReference type="EchoBASE" id="EB2038"/>
<dbReference type="eggNOG" id="COG1011">
    <property type="taxonomic scope" value="Bacteria"/>
</dbReference>
<dbReference type="HOGENOM" id="CLU_045011_8_1_6"/>
<dbReference type="InParanoid" id="P0A8Y1"/>
<dbReference type="OMA" id="CWLNAHQ"/>
<dbReference type="OrthoDB" id="148966at2"/>
<dbReference type="PhylomeDB" id="P0A8Y1"/>
<dbReference type="BioCyc" id="EcoCyc:EG12115-MONOMER"/>
<dbReference type="BioCyc" id="MetaCyc:EG12115-MONOMER"/>
<dbReference type="SABIO-RK" id="P0A8Y1"/>
<dbReference type="PRO" id="PR:P0A8Y1"/>
<dbReference type="Proteomes" id="UP000000625">
    <property type="component" value="Chromosome"/>
</dbReference>
<dbReference type="GO" id="GO:0005737">
    <property type="term" value="C:cytoplasm"/>
    <property type="evidence" value="ECO:0007669"/>
    <property type="project" value="UniProtKB-SubCell"/>
</dbReference>
<dbReference type="GO" id="GO:0002953">
    <property type="term" value="F:5'-deoxynucleotidase activity"/>
    <property type="evidence" value="ECO:0007669"/>
    <property type="project" value="RHEA"/>
</dbReference>
<dbReference type="GO" id="GO:0008253">
    <property type="term" value="F:5'-nucleotidase activity"/>
    <property type="evidence" value="ECO:0000314"/>
    <property type="project" value="EcoCyc"/>
</dbReference>
<dbReference type="GO" id="GO:0030145">
    <property type="term" value="F:manganese ion binding"/>
    <property type="evidence" value="ECO:0000314"/>
    <property type="project" value="EcoCyc"/>
</dbReference>
<dbReference type="GO" id="GO:0000166">
    <property type="term" value="F:nucleotide binding"/>
    <property type="evidence" value="ECO:0007669"/>
    <property type="project" value="UniProtKB-KW"/>
</dbReference>
<dbReference type="GO" id="GO:0016791">
    <property type="term" value="F:phosphatase activity"/>
    <property type="evidence" value="ECO:0000314"/>
    <property type="project" value="EcoliWiki"/>
</dbReference>
<dbReference type="GO" id="GO:0050340">
    <property type="term" value="F:thymidylate 5'-phosphatase activity"/>
    <property type="evidence" value="ECO:0007669"/>
    <property type="project" value="RHEA"/>
</dbReference>
<dbReference type="GO" id="GO:0043100">
    <property type="term" value="P:pyrimidine nucleobase salvage"/>
    <property type="evidence" value="ECO:0000316"/>
    <property type="project" value="EcoCyc"/>
</dbReference>
<dbReference type="GO" id="GO:0009222">
    <property type="term" value="P:pyrimidine ribonucleotide catabolic process"/>
    <property type="evidence" value="ECO:0000318"/>
    <property type="project" value="GO_Central"/>
</dbReference>
<dbReference type="GO" id="GO:0009410">
    <property type="term" value="P:response to xenobiotic stimulus"/>
    <property type="evidence" value="ECO:0000315"/>
    <property type="project" value="EcoCyc"/>
</dbReference>
<dbReference type="GO" id="GO:0019859">
    <property type="term" value="P:thymine metabolic process"/>
    <property type="evidence" value="ECO:0000316"/>
    <property type="project" value="EcoCyc"/>
</dbReference>
<dbReference type="CDD" id="cd04305">
    <property type="entry name" value="HAD_Neu5Ac-Pase_like"/>
    <property type="match status" value="1"/>
</dbReference>
<dbReference type="FunFam" id="1.10.150.240:FF:000005">
    <property type="entry name" value="HAD hydrolase family"/>
    <property type="match status" value="1"/>
</dbReference>
<dbReference type="Gene3D" id="3.40.50.1000">
    <property type="entry name" value="HAD superfamily/HAD-like"/>
    <property type="match status" value="1"/>
</dbReference>
<dbReference type="Gene3D" id="1.10.150.240">
    <property type="entry name" value="Putative phosphatase, domain 2"/>
    <property type="match status" value="1"/>
</dbReference>
<dbReference type="InterPro" id="IPR036412">
    <property type="entry name" value="HAD-like_sf"/>
</dbReference>
<dbReference type="InterPro" id="IPR006439">
    <property type="entry name" value="HAD-SF_hydro_IA"/>
</dbReference>
<dbReference type="InterPro" id="IPR011951">
    <property type="entry name" value="HAD-SF_hydro_IA_YjjG/PynA"/>
</dbReference>
<dbReference type="InterPro" id="IPR023214">
    <property type="entry name" value="HAD_sf"/>
</dbReference>
<dbReference type="InterPro" id="IPR023198">
    <property type="entry name" value="PGP-like_dom2"/>
</dbReference>
<dbReference type="InterPro" id="IPR052550">
    <property type="entry name" value="Pyrimidine_5'-ntase_YjjG"/>
</dbReference>
<dbReference type="NCBIfam" id="TIGR01549">
    <property type="entry name" value="HAD-SF-IA-v1"/>
    <property type="match status" value="1"/>
</dbReference>
<dbReference type="NCBIfam" id="TIGR01509">
    <property type="entry name" value="HAD-SF-IA-v3"/>
    <property type="match status" value="1"/>
</dbReference>
<dbReference type="NCBIfam" id="NF006976">
    <property type="entry name" value="PRK09449.1"/>
    <property type="match status" value="1"/>
</dbReference>
<dbReference type="NCBIfam" id="TIGR02254">
    <property type="entry name" value="YjjG_YfnB"/>
    <property type="match status" value="1"/>
</dbReference>
<dbReference type="PANTHER" id="PTHR47478">
    <property type="match status" value="1"/>
</dbReference>
<dbReference type="PANTHER" id="PTHR47478:SF1">
    <property type="entry name" value="PYRIMIDINE 5'-NUCLEOTIDASE YJJG"/>
    <property type="match status" value="1"/>
</dbReference>
<dbReference type="Pfam" id="PF00702">
    <property type="entry name" value="Hydrolase"/>
    <property type="match status" value="1"/>
</dbReference>
<dbReference type="SFLD" id="SFLDG01135">
    <property type="entry name" value="C1.5.6:_HAD__Beta-PGM__Phospha"/>
    <property type="match status" value="1"/>
</dbReference>
<dbReference type="SFLD" id="SFLDS00003">
    <property type="entry name" value="Haloacid_Dehalogenase"/>
    <property type="match status" value="1"/>
</dbReference>
<dbReference type="SUPFAM" id="SSF56784">
    <property type="entry name" value="HAD-like"/>
    <property type="match status" value="1"/>
</dbReference>
<accession>P0A8Y1</accession>
<accession>P33999</accession>
<accession>P76818</accession>
<accession>Q2M5U4</accession>
<protein>
    <recommendedName>
        <fullName>Pyrimidine 5'-nucleotidase YjjG</fullName>
        <ecNumber evidence="2">3.1.3.5</ecNumber>
    </recommendedName>
    <alternativeName>
        <fullName>House-cleaning nucleotidase</fullName>
    </alternativeName>
    <alternativeName>
        <fullName>Non-canonical pyrimidine nucleotide phosphatase</fullName>
    </alternativeName>
    <alternativeName>
        <fullName>Nucleoside 5'-monophosphate phosphohydrolase</fullName>
    </alternativeName>
    <alternativeName>
        <fullName>dUMP phosphatase</fullName>
    </alternativeName>
</protein>
<organism>
    <name type="scientific">Escherichia coli (strain K12)</name>
    <dbReference type="NCBI Taxonomy" id="83333"/>
    <lineage>
        <taxon>Bacteria</taxon>
        <taxon>Pseudomonadati</taxon>
        <taxon>Pseudomonadota</taxon>
        <taxon>Gammaproteobacteria</taxon>
        <taxon>Enterobacterales</taxon>
        <taxon>Enterobacteriaceae</taxon>
        <taxon>Escherichia</taxon>
    </lineage>
</organism>
<proteinExistence type="evidence at protein level"/>
<keyword id="KW-0170">Cobalt</keyword>
<keyword id="KW-0963">Cytoplasm</keyword>
<keyword id="KW-0378">Hydrolase</keyword>
<keyword id="KW-0460">Magnesium</keyword>
<keyword id="KW-0464">Manganese</keyword>
<keyword id="KW-0479">Metal-binding</keyword>
<keyword id="KW-0547">Nucleotide-binding</keyword>
<keyword id="KW-1185">Reference proteome</keyword>
<gene>
    <name type="primary">yjjG</name>
    <name type="ordered locus">b4374</name>
    <name type="ordered locus">JW4336</name>
</gene>
<evidence type="ECO:0000250" key="1"/>
<evidence type="ECO:0000269" key="2">
    <source>
    </source>
</evidence>
<evidence type="ECO:0000269" key="3">
    <source>
    </source>
</evidence>
<evidence type="ECO:0000269" key="4">
    <source>
    </source>
</evidence>
<evidence type="ECO:0000305" key="5"/>